<evidence type="ECO:0000255" key="1"/>
<reference key="1">
    <citation type="journal article" date="1998" name="Science">
        <title>Genome sequence of the nematode C. elegans: a platform for investigating biology.</title>
        <authorList>
            <consortium name="The C. elegans sequencing consortium"/>
        </authorList>
    </citation>
    <scope>NUCLEOTIDE SEQUENCE [LARGE SCALE GENOMIC DNA]</scope>
    <source>
        <strain>Bristol N2</strain>
    </source>
</reference>
<organism>
    <name type="scientific">Caenorhabditis elegans</name>
    <dbReference type="NCBI Taxonomy" id="6239"/>
    <lineage>
        <taxon>Eukaryota</taxon>
        <taxon>Metazoa</taxon>
        <taxon>Ecdysozoa</taxon>
        <taxon>Nematoda</taxon>
        <taxon>Chromadorea</taxon>
        <taxon>Rhabditida</taxon>
        <taxon>Rhabditina</taxon>
        <taxon>Rhabditomorpha</taxon>
        <taxon>Rhabditoidea</taxon>
        <taxon>Rhabditidae</taxon>
        <taxon>Peloderinae</taxon>
        <taxon>Caenorhabditis</taxon>
    </lineage>
</organism>
<gene>
    <name type="ORF">C03B1.1</name>
</gene>
<name>YX01_CAEEL</name>
<accession>Q11108</accession>
<keyword id="KW-0175">Coiled coil</keyword>
<keyword id="KW-1185">Reference proteome</keyword>
<protein>
    <recommendedName>
        <fullName>Uncharacterized protein C03B1.1</fullName>
    </recommendedName>
</protein>
<dbReference type="EMBL" id="FO080304">
    <property type="protein sequence ID" value="CCD62737.2"/>
    <property type="molecule type" value="Genomic_DNA"/>
</dbReference>
<dbReference type="PIR" id="T15388">
    <property type="entry name" value="T15388"/>
</dbReference>
<dbReference type="RefSeq" id="NP_509071.2">
    <property type="nucleotide sequence ID" value="NM_076670.2"/>
</dbReference>
<dbReference type="SMR" id="Q11108"/>
<dbReference type="FunCoup" id="Q11108">
    <property type="interactions" value="1203"/>
</dbReference>
<dbReference type="PaxDb" id="6239-C03B1.1"/>
<dbReference type="EnsemblMetazoa" id="C03B1.1.1">
    <property type="protein sequence ID" value="C03B1.1.1"/>
    <property type="gene ID" value="WBGene00015372"/>
</dbReference>
<dbReference type="GeneID" id="182144"/>
<dbReference type="KEGG" id="cel:CELE_C03B1.1"/>
<dbReference type="UCSC" id="C03B1.1">
    <property type="organism name" value="c. elegans"/>
</dbReference>
<dbReference type="AGR" id="WB:WBGene00015372"/>
<dbReference type="CTD" id="182144"/>
<dbReference type="WormBase" id="C03B1.1">
    <property type="protein sequence ID" value="CE47931"/>
    <property type="gene ID" value="WBGene00015372"/>
</dbReference>
<dbReference type="eggNOG" id="ENOG502R2MD">
    <property type="taxonomic scope" value="Eukaryota"/>
</dbReference>
<dbReference type="HOGENOM" id="CLU_1070533_0_0_1"/>
<dbReference type="InParanoid" id="Q11108"/>
<dbReference type="OMA" id="HRDYASK"/>
<dbReference type="OrthoDB" id="5896858at2759"/>
<dbReference type="PRO" id="PR:Q11108"/>
<dbReference type="Proteomes" id="UP000001940">
    <property type="component" value="Chromosome X"/>
</dbReference>
<feature type="chain" id="PRO_0000065116" description="Uncharacterized protein C03B1.1">
    <location>
        <begin position="1"/>
        <end position="260"/>
    </location>
</feature>
<feature type="coiled-coil region" evidence="1">
    <location>
        <begin position="1"/>
        <end position="38"/>
    </location>
</feature>
<proteinExistence type="predicted"/>
<sequence>MNWTREIEQYKQVVASYKLKMKRMEMKISDISEEKRQSSMLFDPAGTHSDDKEVCEYWRMINYVDQNFNLIGGMIKMHQYCLSVYNKSGSGYFRDGANFFRNADPLNLSNDSKIPIQMVCMNLWTCEKIEIWYRDFYSHRYLEQVDGKEKYDEDQYTVFDQLFDNLGSDASTLMEQQIELMRNYCQAKAELTNMVEFQRGVRFWRMVSPIHLPRNYQLALILAKRNGWVHEDVERWFRVLYDESCCVGARGRDVYLNFGR</sequence>